<name>CLHC1_RAT</name>
<gene>
    <name type="primary">Clhc1</name>
    <name type="synonym">C2orf63</name>
</gene>
<reference key="1">
    <citation type="journal article" date="2004" name="Genome Res.">
        <title>The status, quality, and expansion of the NIH full-length cDNA project: the Mammalian Gene Collection (MGC).</title>
        <authorList>
            <consortium name="The MGC Project Team"/>
        </authorList>
    </citation>
    <scope>NUCLEOTIDE SEQUENCE [LARGE SCALE MRNA]</scope>
    <source>
        <tissue>Testis</tissue>
    </source>
</reference>
<proteinExistence type="evidence at transcript level"/>
<protein>
    <recommendedName>
        <fullName>Clathrin heavy chain linker domain-containing protein 1</fullName>
    </recommendedName>
</protein>
<keyword id="KW-0175">Coiled coil</keyword>
<keyword id="KW-1185">Reference proteome</keyword>
<organism>
    <name type="scientific">Rattus norvegicus</name>
    <name type="common">Rat</name>
    <dbReference type="NCBI Taxonomy" id="10116"/>
    <lineage>
        <taxon>Eukaryota</taxon>
        <taxon>Metazoa</taxon>
        <taxon>Chordata</taxon>
        <taxon>Craniata</taxon>
        <taxon>Vertebrata</taxon>
        <taxon>Euteleostomi</taxon>
        <taxon>Mammalia</taxon>
        <taxon>Eutheria</taxon>
        <taxon>Euarchontoglires</taxon>
        <taxon>Glires</taxon>
        <taxon>Rodentia</taxon>
        <taxon>Myomorpha</taxon>
        <taxon>Muroidea</taxon>
        <taxon>Muridae</taxon>
        <taxon>Murinae</taxon>
        <taxon>Rattus</taxon>
    </lineage>
</organism>
<sequence length="585" mass="67543">MPTQEVKKHAVLPPIISRNDKEFLESMQRYIITETKRVGCNEEGPPDEYYTIYRNVFDKVIDYVNAYKSVLTSIKKEYDAFIETVKKGRRNAFYLHGKLKVLAAEPTALVYHQRRTIQLEAKMRIIDNNSKAIQLQIDQMKQLRMEYENTEVKLCASSKQLWKPIPGMTLQDSVNLDALNNHKQNLEDKCRKLKQDMSTMYVSAQKKADLDEEMIVLLKRRDIAENLNKDLRFRHQRLQVISHTLNSWMKQNMRIPFKDVLERIQQTKAIYGHAKVVDELFEDDPNKTKEAIVMLYYIERFHELISLGEYEKAACFAANSPKRILQNAGTMNKFKAIGKVRGKPLPLLLFFEAIFNTSQAFKRAINVDLTLEGIKCGLSEERLDLVTHWVTQAKLTFSEKVGDAICAYGEQHPYHKSKCLALAQIVYNECGLHKKAILCLCRQGQFHEAMEHIQQSKDINTDDLIQLITACPQIDLIRGLTEERNGKPPFLSFGLTVLHLFSVDMKKIGMKLLQEVSKAEKDVIEHLVMSDLFCSIEKWQELANICLQNGFKNLSNDIMSILRSQAGVSEISEDDTTNVMEHVFW</sequence>
<accession>Q5XIR8</accession>
<dbReference type="EMBL" id="BC083604">
    <property type="protein sequence ID" value="AAH83604.1"/>
    <property type="molecule type" value="mRNA"/>
</dbReference>
<dbReference type="RefSeq" id="NP_001013899.1">
    <property type="nucleotide sequence ID" value="NM_001013877.1"/>
</dbReference>
<dbReference type="RefSeq" id="XP_008768677.1">
    <property type="nucleotide sequence ID" value="XM_008770455.4"/>
</dbReference>
<dbReference type="SMR" id="Q5XIR8"/>
<dbReference type="FunCoup" id="Q5XIR8">
    <property type="interactions" value="548"/>
</dbReference>
<dbReference type="STRING" id="10116.ENSRNOP00000006085"/>
<dbReference type="PhosphoSitePlus" id="Q5XIR8"/>
<dbReference type="PaxDb" id="10116-ENSRNOP00000006085"/>
<dbReference type="Ensembl" id="ENSRNOT00000006085.6">
    <property type="protein sequence ID" value="ENSRNOP00000006085.3"/>
    <property type="gene ID" value="ENSRNOG00000004456.7"/>
</dbReference>
<dbReference type="GeneID" id="289865"/>
<dbReference type="KEGG" id="rno:289865"/>
<dbReference type="UCSC" id="RGD:1307937">
    <property type="organism name" value="rat"/>
</dbReference>
<dbReference type="AGR" id="RGD:1307937"/>
<dbReference type="CTD" id="130162"/>
<dbReference type="RGD" id="1307937">
    <property type="gene designation" value="Clhc1"/>
</dbReference>
<dbReference type="eggNOG" id="KOG0985">
    <property type="taxonomic scope" value="Eukaryota"/>
</dbReference>
<dbReference type="GeneTree" id="ENSGT00950000183166"/>
<dbReference type="HOGENOM" id="CLU_033164_0_0_1"/>
<dbReference type="InParanoid" id="Q5XIR8"/>
<dbReference type="OMA" id="IGTMNKF"/>
<dbReference type="OrthoDB" id="2113814at2759"/>
<dbReference type="PhylomeDB" id="Q5XIR8"/>
<dbReference type="TreeFam" id="TF328858"/>
<dbReference type="PRO" id="PR:Q5XIR8"/>
<dbReference type="Proteomes" id="UP000002494">
    <property type="component" value="Chromosome 14"/>
</dbReference>
<dbReference type="Bgee" id="ENSRNOG00000004456">
    <property type="expression patterns" value="Expressed in testis and 4 other cell types or tissues"/>
</dbReference>
<dbReference type="Gene3D" id="1.25.40.30">
    <property type="match status" value="1"/>
</dbReference>
<dbReference type="InterPro" id="IPR016024">
    <property type="entry name" value="ARM-type_fold"/>
</dbReference>
<dbReference type="InterPro" id="IPR012331">
    <property type="entry name" value="Clathrin_H-chain_linker"/>
</dbReference>
<dbReference type="InterPro" id="IPR017212">
    <property type="entry name" value="CLHC1"/>
</dbReference>
<dbReference type="InterPro" id="IPR032755">
    <property type="entry name" value="TSNAXIP1_N"/>
</dbReference>
<dbReference type="PANTHER" id="PTHR10292:SF11">
    <property type="entry name" value="CLATHRIN HEAVY CHAIN LINKER DOMAIN-CONTAINING PROTEIN 1"/>
    <property type="match status" value="1"/>
</dbReference>
<dbReference type="PANTHER" id="PTHR10292">
    <property type="entry name" value="CLATHRIN HEAVY CHAIN RELATED"/>
    <property type="match status" value="1"/>
</dbReference>
<dbReference type="Pfam" id="PF13838">
    <property type="entry name" value="Clathrin_H_link"/>
    <property type="match status" value="1"/>
</dbReference>
<dbReference type="Pfam" id="PF15739">
    <property type="entry name" value="TSNAXIP1_N"/>
    <property type="match status" value="1"/>
</dbReference>
<dbReference type="PIRSF" id="PIRSF037469">
    <property type="entry name" value="Clathrin_H-chain-rel"/>
    <property type="match status" value="1"/>
</dbReference>
<dbReference type="SUPFAM" id="SSF48371">
    <property type="entry name" value="ARM repeat"/>
    <property type="match status" value="1"/>
</dbReference>
<evidence type="ECO:0000255" key="1"/>
<feature type="chain" id="PRO_0000325873" description="Clathrin heavy chain linker domain-containing protein 1">
    <location>
        <begin position="1"/>
        <end position="585"/>
    </location>
</feature>
<feature type="coiled-coil region" evidence="1">
    <location>
        <begin position="118"/>
        <end position="239"/>
    </location>
</feature>